<geneLocation type="chloroplast"/>
<sequence length="54" mass="5867">MSPQTETKASVGFKAGVKDYKLTYYTPDYVTKDTDILAAFRVSPQPGVPPEEAG</sequence>
<proteinExistence type="inferred from homology"/>
<accession>P31191</accession>
<keyword id="KW-0007">Acetylation</keyword>
<keyword id="KW-0113">Calvin cycle</keyword>
<keyword id="KW-0120">Carbon dioxide fixation</keyword>
<keyword id="KW-0150">Chloroplast</keyword>
<keyword id="KW-0456">Lyase</keyword>
<keyword id="KW-0488">Methylation</keyword>
<keyword id="KW-0503">Monooxygenase</keyword>
<keyword id="KW-0560">Oxidoreductase</keyword>
<keyword id="KW-0601">Photorespiration</keyword>
<keyword id="KW-0602">Photosynthesis</keyword>
<keyword id="KW-0934">Plastid</keyword>
<feature type="propeptide" id="PRO_0000031259" evidence="1">
    <location>
        <begin position="1"/>
        <end position="2"/>
    </location>
</feature>
<feature type="chain" id="PRO_0000031260" description="Ribulose bisphosphate carboxylase large chain">
    <location>
        <begin position="3"/>
        <end position="54" status="greater than"/>
    </location>
</feature>
<feature type="modified residue" description="N-acetylproline" evidence="1">
    <location>
        <position position="3"/>
    </location>
</feature>
<feature type="modified residue" description="N6,N6,N6-trimethyllysine" evidence="1">
    <location>
        <position position="14"/>
    </location>
</feature>
<feature type="non-terminal residue">
    <location>
        <position position="54"/>
    </location>
</feature>
<dbReference type="EC" id="4.1.1.39"/>
<dbReference type="EMBL" id="X69741">
    <property type="protein sequence ID" value="CAA49396.1"/>
    <property type="molecule type" value="Genomic_DNA"/>
</dbReference>
<dbReference type="PIR" id="S31527">
    <property type="entry name" value="S31527"/>
</dbReference>
<dbReference type="SMR" id="P31191"/>
<dbReference type="GO" id="GO:0009507">
    <property type="term" value="C:chloroplast"/>
    <property type="evidence" value="ECO:0007669"/>
    <property type="project" value="UniProtKB-SubCell"/>
</dbReference>
<dbReference type="GO" id="GO:0004497">
    <property type="term" value="F:monooxygenase activity"/>
    <property type="evidence" value="ECO:0007669"/>
    <property type="project" value="UniProtKB-KW"/>
</dbReference>
<dbReference type="GO" id="GO:0016984">
    <property type="term" value="F:ribulose-bisphosphate carboxylase activity"/>
    <property type="evidence" value="ECO:0007669"/>
    <property type="project" value="UniProtKB-EC"/>
</dbReference>
<dbReference type="GO" id="GO:0009853">
    <property type="term" value="P:photorespiration"/>
    <property type="evidence" value="ECO:0007669"/>
    <property type="project" value="UniProtKB-KW"/>
</dbReference>
<dbReference type="GO" id="GO:0019253">
    <property type="term" value="P:reductive pentose-phosphate cycle"/>
    <property type="evidence" value="ECO:0007669"/>
    <property type="project" value="UniProtKB-KW"/>
</dbReference>
<dbReference type="Gene3D" id="3.30.70.150">
    <property type="entry name" value="RuBisCO large subunit, N-terminal domain"/>
    <property type="match status" value="1"/>
</dbReference>
<dbReference type="InterPro" id="IPR033966">
    <property type="entry name" value="RuBisCO"/>
</dbReference>
<dbReference type="InterPro" id="IPR017443">
    <property type="entry name" value="RuBisCO_lsu_fd_N"/>
</dbReference>
<dbReference type="InterPro" id="IPR036422">
    <property type="entry name" value="RuBisCO_lsu_N_sf"/>
</dbReference>
<dbReference type="PANTHER" id="PTHR42704">
    <property type="entry name" value="RIBULOSE BISPHOSPHATE CARBOXYLASE"/>
    <property type="match status" value="1"/>
</dbReference>
<dbReference type="PANTHER" id="PTHR42704:SF15">
    <property type="entry name" value="RIBULOSE BISPHOSPHATE CARBOXYLASE LARGE CHAIN"/>
    <property type="match status" value="1"/>
</dbReference>
<dbReference type="Pfam" id="PF02788">
    <property type="entry name" value="RuBisCO_large_N"/>
    <property type="match status" value="1"/>
</dbReference>
<dbReference type="SUPFAM" id="SSF54966">
    <property type="entry name" value="RuBisCO, large subunit, small (N-terminal) domain"/>
    <property type="match status" value="1"/>
</dbReference>
<organism>
    <name type="scientific">Ilex aquifolium</name>
    <name type="common">English holly</name>
    <dbReference type="NCBI Taxonomy" id="4298"/>
    <lineage>
        <taxon>Eukaryota</taxon>
        <taxon>Viridiplantae</taxon>
        <taxon>Streptophyta</taxon>
        <taxon>Embryophyta</taxon>
        <taxon>Tracheophyta</taxon>
        <taxon>Spermatophyta</taxon>
        <taxon>Magnoliopsida</taxon>
        <taxon>eudicotyledons</taxon>
        <taxon>Gunneridae</taxon>
        <taxon>Pentapetalae</taxon>
        <taxon>asterids</taxon>
        <taxon>campanulids</taxon>
        <taxon>Aquifoliales</taxon>
        <taxon>Aquifoliaceae</taxon>
        <taxon>Ilex</taxon>
    </lineage>
</organism>
<evidence type="ECO:0000250" key="1"/>
<evidence type="ECO:0000305" key="2"/>
<name>RBL_ILEAQ</name>
<reference key="1">
    <citation type="journal article" date="1994" name="Mol. Phylogenet. Evol.">
        <title>Molecular phylogeny of families related to Celastrales based on rbcL 5' flanking sequences.</title>
        <authorList>
            <person name="Savolainen V."/>
            <person name="Manen J.F."/>
            <person name="Douzery E.J.P."/>
            <person name="Spichiger R."/>
        </authorList>
    </citation>
    <scope>NUCLEOTIDE SEQUENCE [GENOMIC DNA]</scope>
    <source>
        <strain>Sample IAQ4</strain>
    </source>
</reference>
<comment type="function">
    <text evidence="1">RuBisCO catalyzes two reactions: the carboxylation of D-ribulose 1,5-bisphosphate, the primary event in carbon dioxide fixation, as well as the oxidative fragmentation of the pentose substrate in the photorespiration process. Both reactions occur simultaneously and in competition at the same active site (By similarity).</text>
</comment>
<comment type="catalytic activity">
    <reaction>
        <text>2 (2R)-3-phosphoglycerate + 2 H(+) = D-ribulose 1,5-bisphosphate + CO2 + H2O</text>
        <dbReference type="Rhea" id="RHEA:23124"/>
        <dbReference type="ChEBI" id="CHEBI:15377"/>
        <dbReference type="ChEBI" id="CHEBI:15378"/>
        <dbReference type="ChEBI" id="CHEBI:16526"/>
        <dbReference type="ChEBI" id="CHEBI:57870"/>
        <dbReference type="ChEBI" id="CHEBI:58272"/>
        <dbReference type="EC" id="4.1.1.39"/>
    </reaction>
</comment>
<comment type="catalytic activity">
    <reaction>
        <text>D-ribulose 1,5-bisphosphate + O2 = 2-phosphoglycolate + (2R)-3-phosphoglycerate + 2 H(+)</text>
        <dbReference type="Rhea" id="RHEA:36631"/>
        <dbReference type="ChEBI" id="CHEBI:15378"/>
        <dbReference type="ChEBI" id="CHEBI:15379"/>
        <dbReference type="ChEBI" id="CHEBI:57870"/>
        <dbReference type="ChEBI" id="CHEBI:58033"/>
        <dbReference type="ChEBI" id="CHEBI:58272"/>
    </reaction>
</comment>
<comment type="subunit">
    <text evidence="1">Heterohexadecamer of 8 large chains and 8 small chains.</text>
</comment>
<comment type="subcellular location">
    <subcellularLocation>
        <location>Plastid</location>
        <location>Chloroplast</location>
    </subcellularLocation>
</comment>
<comment type="miscellaneous">
    <text evidence="1">The basic functional RuBisCO is composed of a large chain homodimer in a 'head-to-tail' conformation. In form I RuBisCO this homodimer is arranged in a barrel-like tetramer with the small subunits forming a tetrameric 'cap' on each end of the 'barrel' (By similarity).</text>
</comment>
<comment type="similarity">
    <text evidence="2">Belongs to the RuBisCO large chain family. Type I subfamily.</text>
</comment>
<gene>
    <name type="primary">rbcL</name>
</gene>
<protein>
    <recommendedName>
        <fullName>Ribulose bisphosphate carboxylase large chain</fullName>
        <shortName>RuBisCO large subunit</shortName>
        <ecNumber>4.1.1.39</ecNumber>
    </recommendedName>
</protein>